<proteinExistence type="inferred from homology"/>
<comment type="function">
    <text evidence="1">Component of LSm protein complexes, which are involved in RNA processing and may function in a chaperone-like manner, facilitating the efficient association of RNA processing factors with their substrates. Component of the cytoplasmic LSM1-LSM7 complex, which is thought to be involved in mRNA degradation by activating the decapping step in the 5'-to-3' mRNA decay pathway. Component of the nuclear LSM2-LSM8 complex, which is involved in splicing of nuclear mRNAs. LSM2-LSM8 associates with multiple snRNP complexes containing the U6 snRNA (U4/U6 di-snRNP, spliceosomal U4/U6.U5 tri-snRNP, and free U6 snRNP). It binds directly to the 3'-terminal U-tract of U6 snRNA and plays a role in the biogenesis and stability of the U6 snRNP and U4/U6 snRNP complexes. LSM2-LSM8 probably also is involved degradation of nuclear pre-mRNA by targeting them for decapping, and in processing of pre-tRNAs, pre-rRNAs and U3 snoRNA (By similarity).</text>
</comment>
<comment type="subunit">
    <text evidence="1">Component of the heptameric LSM1-LSM7 complex, which consists of LSM1, LSM2, LSM3, LSM4, LSM5, LSM6 and LSM7. Component of the heptameric LSM2-LSM8 complex, which consists of LSM2, LSM3, LSM4, LSM5, LSM6, LSM7 and LSM8. The LSm subunits form a seven-membered ring structure with a doughnut shape (By similarity).</text>
</comment>
<comment type="subcellular location">
    <subcellularLocation>
        <location evidence="1">Cytoplasm</location>
    </subcellularLocation>
    <subcellularLocation>
        <location evidence="1">Nucleus</location>
    </subcellularLocation>
</comment>
<comment type="similarity">
    <text evidence="3">Belongs to the snRNP Sm proteins family. SmF/LSm6 subfamily.</text>
</comment>
<reference key="1">
    <citation type="journal article" date="2005" name="Nature">
        <title>The genome sequence of the rice blast fungus Magnaporthe grisea.</title>
        <authorList>
            <person name="Dean R.A."/>
            <person name="Talbot N.J."/>
            <person name="Ebbole D.J."/>
            <person name="Farman M.L."/>
            <person name="Mitchell T.K."/>
            <person name="Orbach M.J."/>
            <person name="Thon M.R."/>
            <person name="Kulkarni R."/>
            <person name="Xu J.-R."/>
            <person name="Pan H."/>
            <person name="Read N.D."/>
            <person name="Lee Y.-H."/>
            <person name="Carbone I."/>
            <person name="Brown D."/>
            <person name="Oh Y.Y."/>
            <person name="Donofrio N."/>
            <person name="Jeong J.S."/>
            <person name="Soanes D.M."/>
            <person name="Djonovic S."/>
            <person name="Kolomiets E."/>
            <person name="Rehmeyer C."/>
            <person name="Li W."/>
            <person name="Harding M."/>
            <person name="Kim S."/>
            <person name="Lebrun M.-H."/>
            <person name="Bohnert H."/>
            <person name="Coughlan S."/>
            <person name="Butler J."/>
            <person name="Calvo S.E."/>
            <person name="Ma L.-J."/>
            <person name="Nicol R."/>
            <person name="Purcell S."/>
            <person name="Nusbaum C."/>
            <person name="Galagan J.E."/>
            <person name="Birren B.W."/>
        </authorList>
    </citation>
    <scope>NUCLEOTIDE SEQUENCE [LARGE SCALE GENOMIC DNA]</scope>
    <source>
        <strain>70-15 / ATCC MYA-4617 / FGSC 8958</strain>
    </source>
</reference>
<protein>
    <recommendedName>
        <fullName>U6 snRNA-associated Sm-like protein LSm6</fullName>
    </recommendedName>
</protein>
<sequence>MENGTMTQGEGKDPTSFLGEIIGNMVTVKLNSGVIYKGELQSVDGYMNIALEKAEEWVAGQKKRSYGDAFVRGNNVMYIAASP</sequence>
<feature type="chain" id="PRO_0000333600" description="U6 snRNA-associated Sm-like protein LSm6">
    <location>
        <begin position="1"/>
        <end position="83"/>
    </location>
</feature>
<feature type="domain" description="Sm" evidence="2">
    <location>
        <begin position="13"/>
        <end position="83"/>
    </location>
</feature>
<dbReference type="EMBL" id="CM001231">
    <property type="protein sequence ID" value="EHA57988.1"/>
    <property type="molecule type" value="Genomic_DNA"/>
</dbReference>
<dbReference type="RefSeq" id="XP_003710600.1">
    <property type="nucleotide sequence ID" value="XM_003710552.1"/>
</dbReference>
<dbReference type="SMR" id="A4RQ29"/>
<dbReference type="FunCoup" id="A4RQ29">
    <property type="interactions" value="780"/>
</dbReference>
<dbReference type="STRING" id="242507.A4RQ29"/>
<dbReference type="EnsemblFungi" id="MGG_05701T0">
    <property type="protein sequence ID" value="MGG_05701T0"/>
    <property type="gene ID" value="MGG_05701"/>
</dbReference>
<dbReference type="GeneID" id="2676106"/>
<dbReference type="KEGG" id="mgr:MGG_05701"/>
<dbReference type="VEuPathDB" id="FungiDB:MGG_05701"/>
<dbReference type="eggNOG" id="KOG1783">
    <property type="taxonomic scope" value="Eukaryota"/>
</dbReference>
<dbReference type="HOGENOM" id="CLU_076902_7_4_1"/>
<dbReference type="InParanoid" id="A4RQ29"/>
<dbReference type="OMA" id="EQTVEYV"/>
<dbReference type="OrthoDB" id="268799at2759"/>
<dbReference type="Proteomes" id="UP000009058">
    <property type="component" value="Chromosome 1"/>
</dbReference>
<dbReference type="GO" id="GO:1990726">
    <property type="term" value="C:Lsm1-7-Pat1 complex"/>
    <property type="evidence" value="ECO:0007669"/>
    <property type="project" value="EnsemblFungi"/>
</dbReference>
<dbReference type="GO" id="GO:0005730">
    <property type="term" value="C:nucleolus"/>
    <property type="evidence" value="ECO:0007669"/>
    <property type="project" value="EnsemblFungi"/>
</dbReference>
<dbReference type="GO" id="GO:0000932">
    <property type="term" value="C:P-body"/>
    <property type="evidence" value="ECO:0007669"/>
    <property type="project" value="EnsemblFungi"/>
</dbReference>
<dbReference type="GO" id="GO:0005732">
    <property type="term" value="C:sno(s)RNA-containing ribonucleoprotein complex"/>
    <property type="evidence" value="ECO:0007669"/>
    <property type="project" value="EnsemblFungi"/>
</dbReference>
<dbReference type="GO" id="GO:0005681">
    <property type="term" value="C:spliceosomal complex"/>
    <property type="evidence" value="ECO:0007669"/>
    <property type="project" value="UniProtKB-KW"/>
</dbReference>
<dbReference type="GO" id="GO:0046540">
    <property type="term" value="C:U4/U6 x U5 tri-snRNP complex"/>
    <property type="evidence" value="ECO:0007669"/>
    <property type="project" value="EnsemblFungi"/>
</dbReference>
<dbReference type="GO" id="GO:0005688">
    <property type="term" value="C:U6 snRNP"/>
    <property type="evidence" value="ECO:0007669"/>
    <property type="project" value="EnsemblFungi"/>
</dbReference>
<dbReference type="GO" id="GO:0003723">
    <property type="term" value="F:RNA binding"/>
    <property type="evidence" value="ECO:0007669"/>
    <property type="project" value="UniProtKB-KW"/>
</dbReference>
<dbReference type="GO" id="GO:0000290">
    <property type="term" value="P:deadenylation-dependent decapping of nuclear-transcribed mRNA"/>
    <property type="evidence" value="ECO:0007669"/>
    <property type="project" value="EnsemblFungi"/>
</dbReference>
<dbReference type="GO" id="GO:0030490">
    <property type="term" value="P:maturation of SSU-rRNA"/>
    <property type="evidence" value="ECO:0007669"/>
    <property type="project" value="EnsemblFungi"/>
</dbReference>
<dbReference type="GO" id="GO:0000398">
    <property type="term" value="P:mRNA splicing, via spliceosome"/>
    <property type="evidence" value="ECO:0007669"/>
    <property type="project" value="EnsemblFungi"/>
</dbReference>
<dbReference type="GO" id="GO:0008033">
    <property type="term" value="P:tRNA processing"/>
    <property type="evidence" value="ECO:0007669"/>
    <property type="project" value="UniProtKB-KW"/>
</dbReference>
<dbReference type="CDD" id="cd01726">
    <property type="entry name" value="LSm6"/>
    <property type="match status" value="1"/>
</dbReference>
<dbReference type="FunFam" id="2.30.30.100:FF:000037">
    <property type="entry name" value="U6 snRNA-associated Sm-like protein LSm6"/>
    <property type="match status" value="1"/>
</dbReference>
<dbReference type="Gene3D" id="2.30.30.100">
    <property type="match status" value="1"/>
</dbReference>
<dbReference type="InterPro" id="IPR016487">
    <property type="entry name" value="Lsm6/sSmF"/>
</dbReference>
<dbReference type="InterPro" id="IPR010920">
    <property type="entry name" value="LSM_dom_sf"/>
</dbReference>
<dbReference type="InterPro" id="IPR047575">
    <property type="entry name" value="Sm"/>
</dbReference>
<dbReference type="InterPro" id="IPR001163">
    <property type="entry name" value="Sm_dom_euk/arc"/>
</dbReference>
<dbReference type="PANTHER" id="PTHR11021">
    <property type="entry name" value="SMALL NUCLEAR RIBONUCLEOPROTEIN F SNRNP-F"/>
    <property type="match status" value="1"/>
</dbReference>
<dbReference type="PANTHER" id="PTHR11021:SF1">
    <property type="entry name" value="U6 SNRNA-ASSOCIATED SM-LIKE PROTEIN LSM6"/>
    <property type="match status" value="1"/>
</dbReference>
<dbReference type="Pfam" id="PF01423">
    <property type="entry name" value="LSM"/>
    <property type="match status" value="1"/>
</dbReference>
<dbReference type="PIRSF" id="PIRSF006609">
    <property type="entry name" value="snRNP_SmF"/>
    <property type="match status" value="1"/>
</dbReference>
<dbReference type="SMART" id="SM00651">
    <property type="entry name" value="Sm"/>
    <property type="match status" value="1"/>
</dbReference>
<dbReference type="SUPFAM" id="SSF50182">
    <property type="entry name" value="Sm-like ribonucleoproteins"/>
    <property type="match status" value="1"/>
</dbReference>
<dbReference type="PROSITE" id="PS52002">
    <property type="entry name" value="SM"/>
    <property type="match status" value="1"/>
</dbReference>
<gene>
    <name type="primary">LSM6</name>
    <name type="ORF">MGG_05701</name>
</gene>
<name>LSM6_PYRO7</name>
<keyword id="KW-0963">Cytoplasm</keyword>
<keyword id="KW-0507">mRNA processing</keyword>
<keyword id="KW-0508">mRNA splicing</keyword>
<keyword id="KW-0539">Nucleus</keyword>
<keyword id="KW-1185">Reference proteome</keyword>
<keyword id="KW-0687">Ribonucleoprotein</keyword>
<keyword id="KW-0694">RNA-binding</keyword>
<keyword id="KW-0698">rRNA processing</keyword>
<keyword id="KW-0747">Spliceosome</keyword>
<keyword id="KW-0819">tRNA processing</keyword>
<organism>
    <name type="scientific">Pyricularia oryzae (strain 70-15 / ATCC MYA-4617 / FGSC 8958)</name>
    <name type="common">Rice blast fungus</name>
    <name type="synonym">Magnaporthe oryzae</name>
    <dbReference type="NCBI Taxonomy" id="242507"/>
    <lineage>
        <taxon>Eukaryota</taxon>
        <taxon>Fungi</taxon>
        <taxon>Dikarya</taxon>
        <taxon>Ascomycota</taxon>
        <taxon>Pezizomycotina</taxon>
        <taxon>Sordariomycetes</taxon>
        <taxon>Sordariomycetidae</taxon>
        <taxon>Magnaporthales</taxon>
        <taxon>Pyriculariaceae</taxon>
        <taxon>Pyricularia</taxon>
    </lineage>
</organism>
<evidence type="ECO:0000250" key="1"/>
<evidence type="ECO:0000255" key="2">
    <source>
        <dbReference type="PROSITE-ProRule" id="PRU01346"/>
    </source>
</evidence>
<evidence type="ECO:0000305" key="3"/>
<accession>A4RQ29</accession>
<accession>G4MP39</accession>